<dbReference type="EC" id="4.3.3.7" evidence="1"/>
<dbReference type="EMBL" id="CP000742">
    <property type="protein sequence ID" value="ABR55343.1"/>
    <property type="molecule type" value="Genomic_DNA"/>
</dbReference>
<dbReference type="RefSeq" id="WP_012066257.1">
    <property type="nucleotide sequence ID" value="NC_009634.1"/>
</dbReference>
<dbReference type="SMR" id="A6US71"/>
<dbReference type="STRING" id="406327.Mevan_1449"/>
<dbReference type="GeneID" id="5324836"/>
<dbReference type="KEGG" id="mvn:Mevan_1449"/>
<dbReference type="eggNOG" id="arCOG04172">
    <property type="taxonomic scope" value="Archaea"/>
</dbReference>
<dbReference type="HOGENOM" id="CLU_049343_7_1_2"/>
<dbReference type="OrthoDB" id="33636at2157"/>
<dbReference type="UniPathway" id="UPA00034">
    <property type="reaction ID" value="UER00017"/>
</dbReference>
<dbReference type="Proteomes" id="UP000001107">
    <property type="component" value="Chromosome"/>
</dbReference>
<dbReference type="GO" id="GO:0005737">
    <property type="term" value="C:cytoplasm"/>
    <property type="evidence" value="ECO:0007669"/>
    <property type="project" value="UniProtKB-SubCell"/>
</dbReference>
<dbReference type="GO" id="GO:0008675">
    <property type="term" value="F:2-dehydro-3-deoxy-phosphogluconate aldolase activity"/>
    <property type="evidence" value="ECO:0007669"/>
    <property type="project" value="UniProtKB-ARBA"/>
</dbReference>
<dbReference type="GO" id="GO:0008840">
    <property type="term" value="F:4-hydroxy-tetrahydrodipicolinate synthase activity"/>
    <property type="evidence" value="ECO:0007669"/>
    <property type="project" value="UniProtKB-UniRule"/>
</dbReference>
<dbReference type="GO" id="GO:0019877">
    <property type="term" value="P:diaminopimelate biosynthetic process"/>
    <property type="evidence" value="ECO:0007669"/>
    <property type="project" value="UniProtKB-UniRule"/>
</dbReference>
<dbReference type="GO" id="GO:0009089">
    <property type="term" value="P:lysine biosynthetic process via diaminopimelate"/>
    <property type="evidence" value="ECO:0007669"/>
    <property type="project" value="UniProtKB-UniRule"/>
</dbReference>
<dbReference type="CDD" id="cd00950">
    <property type="entry name" value="DHDPS"/>
    <property type="match status" value="1"/>
</dbReference>
<dbReference type="Gene3D" id="3.20.20.70">
    <property type="entry name" value="Aldolase class I"/>
    <property type="match status" value="1"/>
</dbReference>
<dbReference type="HAMAP" id="MF_00418">
    <property type="entry name" value="DapA"/>
    <property type="match status" value="1"/>
</dbReference>
<dbReference type="InterPro" id="IPR013785">
    <property type="entry name" value="Aldolase_TIM"/>
</dbReference>
<dbReference type="InterPro" id="IPR005263">
    <property type="entry name" value="DapA"/>
</dbReference>
<dbReference type="InterPro" id="IPR002220">
    <property type="entry name" value="DapA-like"/>
</dbReference>
<dbReference type="InterPro" id="IPR020625">
    <property type="entry name" value="Schiff_base-form_aldolases_AS"/>
</dbReference>
<dbReference type="InterPro" id="IPR020624">
    <property type="entry name" value="Schiff_base-form_aldolases_CS"/>
</dbReference>
<dbReference type="NCBIfam" id="TIGR00674">
    <property type="entry name" value="dapA"/>
    <property type="match status" value="1"/>
</dbReference>
<dbReference type="PANTHER" id="PTHR12128:SF66">
    <property type="entry name" value="4-HYDROXY-2-OXOGLUTARATE ALDOLASE, MITOCHONDRIAL"/>
    <property type="match status" value="1"/>
</dbReference>
<dbReference type="PANTHER" id="PTHR12128">
    <property type="entry name" value="DIHYDRODIPICOLINATE SYNTHASE"/>
    <property type="match status" value="1"/>
</dbReference>
<dbReference type="Pfam" id="PF00701">
    <property type="entry name" value="DHDPS"/>
    <property type="match status" value="1"/>
</dbReference>
<dbReference type="PIRSF" id="PIRSF001365">
    <property type="entry name" value="DHDPS"/>
    <property type="match status" value="1"/>
</dbReference>
<dbReference type="PRINTS" id="PR00146">
    <property type="entry name" value="DHPICSNTHASE"/>
</dbReference>
<dbReference type="SMART" id="SM01130">
    <property type="entry name" value="DHDPS"/>
    <property type="match status" value="1"/>
</dbReference>
<dbReference type="SUPFAM" id="SSF51569">
    <property type="entry name" value="Aldolase"/>
    <property type="match status" value="1"/>
</dbReference>
<dbReference type="PROSITE" id="PS00665">
    <property type="entry name" value="DHDPS_1"/>
    <property type="match status" value="1"/>
</dbReference>
<dbReference type="PROSITE" id="PS00666">
    <property type="entry name" value="DHDPS_2"/>
    <property type="match status" value="1"/>
</dbReference>
<comment type="function">
    <text evidence="1">Catalyzes the condensation of (S)-aspartate-beta-semialdehyde [(S)-ASA] and pyruvate to 4-hydroxy-tetrahydrodipicolinate (HTPA).</text>
</comment>
<comment type="catalytic activity">
    <reaction evidence="1">
        <text>L-aspartate 4-semialdehyde + pyruvate = (2S,4S)-4-hydroxy-2,3,4,5-tetrahydrodipicolinate + H2O + H(+)</text>
        <dbReference type="Rhea" id="RHEA:34171"/>
        <dbReference type="ChEBI" id="CHEBI:15361"/>
        <dbReference type="ChEBI" id="CHEBI:15377"/>
        <dbReference type="ChEBI" id="CHEBI:15378"/>
        <dbReference type="ChEBI" id="CHEBI:67139"/>
        <dbReference type="ChEBI" id="CHEBI:537519"/>
        <dbReference type="EC" id="4.3.3.7"/>
    </reaction>
</comment>
<comment type="pathway">
    <text evidence="1">Amino-acid biosynthesis; L-lysine biosynthesis via DAP pathway; (S)-tetrahydrodipicolinate from L-aspartate: step 3/4.</text>
</comment>
<comment type="subunit">
    <text evidence="1">Homotetramer; dimer of dimers.</text>
</comment>
<comment type="subcellular location">
    <subcellularLocation>
        <location evidence="1">Cytoplasm</location>
    </subcellularLocation>
</comment>
<comment type="similarity">
    <text evidence="1">Belongs to the DapA family.</text>
</comment>
<comment type="caution">
    <text evidence="2">Was originally thought to be a dihydrodipicolinate synthase (DHDPS), catalyzing the condensation of (S)-aspartate-beta-semialdehyde [(S)-ASA] and pyruvate to dihydrodipicolinate (DHDP). However, it was shown in E.coli that the product of the enzymatic reaction is not dihydrodipicolinate but in fact (4S)-4-hydroxy-2,3,4,5-tetrahydro-(2S)-dipicolinic acid (HTPA), and that the consecutive dehydration reaction leading to DHDP is not spontaneous but catalyzed by DapB.</text>
</comment>
<keyword id="KW-0028">Amino-acid biosynthesis</keyword>
<keyword id="KW-0963">Cytoplasm</keyword>
<keyword id="KW-0220">Diaminopimelate biosynthesis</keyword>
<keyword id="KW-0456">Lyase</keyword>
<keyword id="KW-0457">Lysine biosynthesis</keyword>
<keyword id="KW-0704">Schiff base</keyword>
<accession>A6US71</accession>
<name>DAPA_METVS</name>
<reference key="1">
    <citation type="submission" date="2007-06" db="EMBL/GenBank/DDBJ databases">
        <title>Complete sequence of Methanococcus vannielii SB.</title>
        <authorList>
            <consortium name="US DOE Joint Genome Institute"/>
            <person name="Copeland A."/>
            <person name="Lucas S."/>
            <person name="Lapidus A."/>
            <person name="Barry K."/>
            <person name="Glavina del Rio T."/>
            <person name="Dalin E."/>
            <person name="Tice H."/>
            <person name="Pitluck S."/>
            <person name="Chain P."/>
            <person name="Malfatti S."/>
            <person name="Shin M."/>
            <person name="Vergez L."/>
            <person name="Schmutz J."/>
            <person name="Larimer F."/>
            <person name="Land M."/>
            <person name="Hauser L."/>
            <person name="Kyrpides N."/>
            <person name="Anderson I."/>
            <person name="Sieprawska-Lupa M."/>
            <person name="Whitman W.B."/>
            <person name="Richardson P."/>
        </authorList>
    </citation>
    <scope>NUCLEOTIDE SEQUENCE [LARGE SCALE GENOMIC DNA]</scope>
    <source>
        <strain>ATCC 35089 / DSM 1224 / JCM 13029 / OCM 148 / SB</strain>
    </source>
</reference>
<sequence length="289" mass="31770">MQGVYPAIVTPFKDGSVDFEGLRKNIDFLIENGVKGVVPVGTTGESPTLTPKEHEKVIEKVVDFVNGRVEVIAGTGSNSTLEALEFSQYAEDVGADRVLLITPYYNKPPQEGLKRHFGEVANSITVPIVLYNVPSRTALNIEPDTIKYLFDEYSNITAIKEANPNLSQVSEILDICNIDVLSGNDELTLPIMSLGGKGVISVIANIAPKEFVQMVEFAEKGKFDKAKEIHYKLFPLMKLMFIETNPIPIKTAMNMLGMPSGELRLPLCEMAQSNKLKLQNALNTLGLLK</sequence>
<evidence type="ECO:0000255" key="1">
    <source>
        <dbReference type="HAMAP-Rule" id="MF_00418"/>
    </source>
</evidence>
<evidence type="ECO:0000305" key="2"/>
<proteinExistence type="inferred from homology"/>
<organism>
    <name type="scientific">Methanococcus vannielii (strain ATCC 35089 / DSM 1224 / JCM 13029 / OCM 148 / SB)</name>
    <dbReference type="NCBI Taxonomy" id="406327"/>
    <lineage>
        <taxon>Archaea</taxon>
        <taxon>Methanobacteriati</taxon>
        <taxon>Methanobacteriota</taxon>
        <taxon>Methanomada group</taxon>
        <taxon>Methanococci</taxon>
        <taxon>Methanococcales</taxon>
        <taxon>Methanococcaceae</taxon>
        <taxon>Methanococcus</taxon>
    </lineage>
</organism>
<protein>
    <recommendedName>
        <fullName evidence="1">4-hydroxy-tetrahydrodipicolinate synthase</fullName>
        <shortName evidence="1">HTPA synthase</shortName>
        <ecNumber evidence="1">4.3.3.7</ecNumber>
    </recommendedName>
</protein>
<gene>
    <name evidence="1" type="primary">dapA</name>
    <name type="ordered locus">Mevan_1449</name>
</gene>
<feature type="chain" id="PRO_1000050225" description="4-hydroxy-tetrahydrodipicolinate synthase">
    <location>
        <begin position="1"/>
        <end position="289"/>
    </location>
</feature>
<feature type="active site" description="Proton donor/acceptor" evidence="1">
    <location>
        <position position="131"/>
    </location>
</feature>
<feature type="active site" description="Schiff-base intermediate with substrate" evidence="1">
    <location>
        <position position="160"/>
    </location>
</feature>
<feature type="binding site" evidence="1">
    <location>
        <position position="43"/>
    </location>
    <ligand>
        <name>pyruvate</name>
        <dbReference type="ChEBI" id="CHEBI:15361"/>
    </ligand>
</feature>
<feature type="binding site" evidence="1">
    <location>
        <position position="200"/>
    </location>
    <ligand>
        <name>pyruvate</name>
        <dbReference type="ChEBI" id="CHEBI:15361"/>
    </ligand>
</feature>
<feature type="site" description="Part of a proton relay during catalysis" evidence="1">
    <location>
        <position position="42"/>
    </location>
</feature>
<feature type="site" description="Part of a proton relay during catalysis" evidence="1">
    <location>
        <position position="105"/>
    </location>
</feature>